<keyword id="KW-1015">Disulfide bond</keyword>
<keyword id="KW-0391">Immunity</keyword>
<keyword id="KW-0393">Immunoglobulin domain</keyword>
<keyword id="KW-0490">MHC I</keyword>
<keyword id="KW-1185">Reference proteome</keyword>
<keyword id="KW-0964">Secreted</keyword>
<keyword id="KW-0732">Signal</keyword>
<feature type="signal peptide" evidence="2">
    <location>
        <begin position="1"/>
        <end position="19"/>
    </location>
</feature>
<feature type="chain" id="PRO_0000018808" description="Beta-2-microglobulin">
    <location>
        <begin position="20"/>
        <end position="116"/>
    </location>
</feature>
<feature type="domain" description="Ig-like C1-type">
    <location>
        <begin position="24"/>
        <end position="110"/>
    </location>
</feature>
<feature type="disulfide bond" evidence="3">
    <location>
        <begin position="44"/>
        <end position="99"/>
    </location>
</feature>
<accession>Q03422</accession>
<sequence length="116" mass="13309">MRAIITFALFCVLYVTVQGKTSSPKVQVYSHFPGEYGKENTLICHVSGFHPPDITIELLKDGEILPNTQQTDLAFEKGWQFHLTKSVTFKPERGQNYACSVRHMNNKNIYSWEPNM</sequence>
<reference key="1">
    <citation type="journal article" date="1993" name="Immunogenetics">
        <title>Characterization of beta 2-microglobulin transcripts from two teleost species.</title>
        <authorList>
            <person name="Dixon B."/>
            <person name="Stet R.J."/>
            <person name="van Erp S.H."/>
            <person name="Pohajdak B."/>
        </authorList>
    </citation>
    <scope>NUCLEOTIDE SEQUENCE [MRNA]</scope>
</reference>
<gene>
    <name type="primary">b2m</name>
</gene>
<proteinExistence type="inferred from homology"/>
<name>B2MG_CYPCA</name>
<evidence type="ECO:0000250" key="1"/>
<evidence type="ECO:0000255" key="2"/>
<evidence type="ECO:0000255" key="3">
    <source>
        <dbReference type="PROSITE-ProRule" id="PRU00114"/>
    </source>
</evidence>
<evidence type="ECO:0000305" key="4"/>
<comment type="function">
    <text evidence="1">Component of the class I major histocompatibility complex (MHC). Involved in the presentation of peptide antigens to the immune system (By similarity).</text>
</comment>
<comment type="subunit">
    <text evidence="1">Heterodimer of an alpha chain and a beta chain. Beta-2-microglobulin is the beta-chain of major histocompatibility complex class I molecules (By similarity).</text>
</comment>
<comment type="subcellular location">
    <subcellularLocation>
        <location evidence="1">Secreted</location>
    </subcellularLocation>
</comment>
<comment type="similarity">
    <text evidence="4">Belongs to the beta-2-microglobulin family.</text>
</comment>
<dbReference type="EMBL" id="L05536">
    <property type="protein sequence ID" value="AAA49203.1"/>
    <property type="molecule type" value="mRNA"/>
</dbReference>
<dbReference type="PIR" id="I50493">
    <property type="entry name" value="I50493"/>
</dbReference>
<dbReference type="SMR" id="Q03422"/>
<dbReference type="GeneID" id="109066526"/>
<dbReference type="KEGG" id="ccar:109066526"/>
<dbReference type="OMA" id="WCVVLVW"/>
<dbReference type="OrthoDB" id="9949628at2759"/>
<dbReference type="Proteomes" id="UP000694384">
    <property type="component" value="Unplaced"/>
</dbReference>
<dbReference type="Proteomes" id="UP000694427">
    <property type="component" value="Unplaced"/>
</dbReference>
<dbReference type="Proteomes" id="UP000694700">
    <property type="component" value="Unplaced"/>
</dbReference>
<dbReference type="Proteomes" id="UP000694701">
    <property type="component" value="Unplaced"/>
</dbReference>
<dbReference type="Proteomes" id="UP001155660">
    <property type="component" value="Chromosome A4"/>
</dbReference>
<dbReference type="GO" id="GO:0005576">
    <property type="term" value="C:extracellular region"/>
    <property type="evidence" value="ECO:0007669"/>
    <property type="project" value="UniProtKB-SubCell"/>
</dbReference>
<dbReference type="GO" id="GO:0042612">
    <property type="term" value="C:MHC class I protein complex"/>
    <property type="evidence" value="ECO:0007669"/>
    <property type="project" value="UniProtKB-KW"/>
</dbReference>
<dbReference type="GO" id="GO:0002474">
    <property type="term" value="P:antigen processing and presentation of peptide antigen via MHC class I"/>
    <property type="evidence" value="ECO:0007669"/>
    <property type="project" value="UniProtKB-KW"/>
</dbReference>
<dbReference type="FunFam" id="2.60.40.10:FF:001005">
    <property type="entry name" value="Beta-2-microglobulin"/>
    <property type="match status" value="1"/>
</dbReference>
<dbReference type="Gene3D" id="2.60.40.10">
    <property type="entry name" value="Immunoglobulins"/>
    <property type="match status" value="1"/>
</dbReference>
<dbReference type="InterPro" id="IPR007110">
    <property type="entry name" value="Ig-like_dom"/>
</dbReference>
<dbReference type="InterPro" id="IPR036179">
    <property type="entry name" value="Ig-like_dom_sf"/>
</dbReference>
<dbReference type="InterPro" id="IPR013783">
    <property type="entry name" value="Ig-like_fold"/>
</dbReference>
<dbReference type="InterPro" id="IPR003006">
    <property type="entry name" value="Ig/MHC_CS"/>
</dbReference>
<dbReference type="InterPro" id="IPR003597">
    <property type="entry name" value="Ig_C1-set"/>
</dbReference>
<dbReference type="InterPro" id="IPR050160">
    <property type="entry name" value="MHC/Immunoglobulin"/>
</dbReference>
<dbReference type="PANTHER" id="PTHR19944:SF62">
    <property type="entry name" value="BETA-2-MICROGLOBULIN"/>
    <property type="match status" value="1"/>
</dbReference>
<dbReference type="PANTHER" id="PTHR19944">
    <property type="entry name" value="MHC CLASS II-RELATED"/>
    <property type="match status" value="1"/>
</dbReference>
<dbReference type="Pfam" id="PF07654">
    <property type="entry name" value="C1-set"/>
    <property type="match status" value="1"/>
</dbReference>
<dbReference type="SMART" id="SM00407">
    <property type="entry name" value="IGc1"/>
    <property type="match status" value="1"/>
</dbReference>
<dbReference type="SUPFAM" id="SSF48726">
    <property type="entry name" value="Immunoglobulin"/>
    <property type="match status" value="1"/>
</dbReference>
<dbReference type="PROSITE" id="PS50835">
    <property type="entry name" value="IG_LIKE"/>
    <property type="match status" value="1"/>
</dbReference>
<dbReference type="PROSITE" id="PS00290">
    <property type="entry name" value="IG_MHC"/>
    <property type="match status" value="1"/>
</dbReference>
<protein>
    <recommendedName>
        <fullName>Beta-2-microglobulin</fullName>
    </recommendedName>
</protein>
<organism>
    <name type="scientific">Cyprinus carpio</name>
    <name type="common">Common carp</name>
    <dbReference type="NCBI Taxonomy" id="7962"/>
    <lineage>
        <taxon>Eukaryota</taxon>
        <taxon>Metazoa</taxon>
        <taxon>Chordata</taxon>
        <taxon>Craniata</taxon>
        <taxon>Vertebrata</taxon>
        <taxon>Euteleostomi</taxon>
        <taxon>Actinopterygii</taxon>
        <taxon>Neopterygii</taxon>
        <taxon>Teleostei</taxon>
        <taxon>Ostariophysi</taxon>
        <taxon>Cypriniformes</taxon>
        <taxon>Cyprinidae</taxon>
        <taxon>Cyprininae</taxon>
        <taxon>Cyprinus</taxon>
    </lineage>
</organism>